<dbReference type="EC" id="5.3.1.16" evidence="1"/>
<dbReference type="EMBL" id="BA000033">
    <property type="protein sequence ID" value="BAB96458.1"/>
    <property type="molecule type" value="Genomic_DNA"/>
</dbReference>
<dbReference type="RefSeq" id="WP_000571736.1">
    <property type="nucleotide sequence ID" value="NC_003923.1"/>
</dbReference>
<dbReference type="SMR" id="Q8NUI2"/>
<dbReference type="KEGG" id="sam:MW2593"/>
<dbReference type="HOGENOM" id="CLU_048577_1_2_9"/>
<dbReference type="UniPathway" id="UPA00031">
    <property type="reaction ID" value="UER00009"/>
</dbReference>
<dbReference type="GO" id="GO:0005737">
    <property type="term" value="C:cytoplasm"/>
    <property type="evidence" value="ECO:0007669"/>
    <property type="project" value="UniProtKB-SubCell"/>
</dbReference>
<dbReference type="GO" id="GO:0003949">
    <property type="term" value="F:1-(5-phosphoribosyl)-5-[(5-phosphoribosylamino)methylideneamino]imidazole-4-carboxamide isomerase activity"/>
    <property type="evidence" value="ECO:0007669"/>
    <property type="project" value="UniProtKB-UniRule"/>
</dbReference>
<dbReference type="GO" id="GO:0000105">
    <property type="term" value="P:L-histidine biosynthetic process"/>
    <property type="evidence" value="ECO:0007669"/>
    <property type="project" value="UniProtKB-UniRule"/>
</dbReference>
<dbReference type="GO" id="GO:0000162">
    <property type="term" value="P:L-tryptophan biosynthetic process"/>
    <property type="evidence" value="ECO:0007669"/>
    <property type="project" value="TreeGrafter"/>
</dbReference>
<dbReference type="CDD" id="cd04732">
    <property type="entry name" value="HisA"/>
    <property type="match status" value="1"/>
</dbReference>
<dbReference type="FunFam" id="3.20.20.70:FF:000213">
    <property type="entry name" value="1-(5-phosphoribosyl)-5-[(5-phosphoribosylamino)methylideneamino] imidazole-4-carboxamide isomerase"/>
    <property type="match status" value="1"/>
</dbReference>
<dbReference type="Gene3D" id="3.20.20.70">
    <property type="entry name" value="Aldolase class I"/>
    <property type="match status" value="1"/>
</dbReference>
<dbReference type="HAMAP" id="MF_01014">
    <property type="entry name" value="HisA"/>
    <property type="match status" value="1"/>
</dbReference>
<dbReference type="InterPro" id="IPR013785">
    <property type="entry name" value="Aldolase_TIM"/>
</dbReference>
<dbReference type="InterPro" id="IPR006062">
    <property type="entry name" value="His_biosynth"/>
</dbReference>
<dbReference type="InterPro" id="IPR006063">
    <property type="entry name" value="HisA_bact_arch"/>
</dbReference>
<dbReference type="InterPro" id="IPR044524">
    <property type="entry name" value="Isoase_HisA-like"/>
</dbReference>
<dbReference type="InterPro" id="IPR023016">
    <property type="entry name" value="Isoase_HisA-like_bact"/>
</dbReference>
<dbReference type="InterPro" id="IPR011060">
    <property type="entry name" value="RibuloseP-bd_barrel"/>
</dbReference>
<dbReference type="NCBIfam" id="TIGR00007">
    <property type="entry name" value="1-(5-phosphoribosyl)-5-[(5-phosphoribosylamino)methylideneamino]imidazole-4-carboxamide isomerase"/>
    <property type="match status" value="1"/>
</dbReference>
<dbReference type="NCBIfam" id="NF010114">
    <property type="entry name" value="PRK13587.1"/>
    <property type="match status" value="1"/>
</dbReference>
<dbReference type="PANTHER" id="PTHR43090">
    <property type="entry name" value="1-(5-PHOSPHORIBOSYL)-5-[(5-PHOSPHORIBOSYLAMINO)METHYLIDENEAMINO] IMIDAZOLE-4-CARBOXAMIDE ISOMERASE"/>
    <property type="match status" value="1"/>
</dbReference>
<dbReference type="PANTHER" id="PTHR43090:SF2">
    <property type="entry name" value="1-(5-PHOSPHORIBOSYL)-5-[(5-PHOSPHORIBOSYLAMINO)METHYLIDENEAMINO] IMIDAZOLE-4-CARBOXAMIDE ISOMERASE"/>
    <property type="match status" value="1"/>
</dbReference>
<dbReference type="Pfam" id="PF00977">
    <property type="entry name" value="His_biosynth"/>
    <property type="match status" value="1"/>
</dbReference>
<dbReference type="SUPFAM" id="SSF51366">
    <property type="entry name" value="Ribulose-phoshate binding barrel"/>
    <property type="match status" value="1"/>
</dbReference>
<sequence length="234" mass="26091">MIELWPAIDLIGSTSVRLTEGKYDSEEKMSRSAEESIAYYSQFECVNRIHIVDLIGAKAQHAREFDYIKSLRRLTTKDIEVGGGIRTKSQIMDYFAAGINYCIVGTKGIQDTDWLKEMAHTFPGRIYLSVDAYGEDIKVNGWEEDTELNLFSFVRRLSDIPLGGIIYTDIAKDGKMSGPNFELTGQLVKATTIPVIASGGIRHQQDIQRLASLNVHAAIIGKAAHQASFWEGLK</sequence>
<protein>
    <recommendedName>
        <fullName evidence="1">1-(5-phosphoribosyl)-5-[(5-phosphoribosylamino)methylideneamino] imidazole-4-carboxamide isomerase</fullName>
        <ecNumber evidence="1">5.3.1.16</ecNumber>
    </recommendedName>
    <alternativeName>
        <fullName evidence="1">Phosphoribosylformimino-5-aminoimidazole carboxamide ribotide isomerase</fullName>
    </alternativeName>
</protein>
<proteinExistence type="inferred from homology"/>
<keyword id="KW-0028">Amino-acid biosynthesis</keyword>
<keyword id="KW-0963">Cytoplasm</keyword>
<keyword id="KW-0368">Histidine biosynthesis</keyword>
<keyword id="KW-0413">Isomerase</keyword>
<evidence type="ECO:0000255" key="1">
    <source>
        <dbReference type="HAMAP-Rule" id="MF_01014"/>
    </source>
</evidence>
<comment type="catalytic activity">
    <reaction evidence="1">
        <text>1-(5-phospho-beta-D-ribosyl)-5-[(5-phospho-beta-D-ribosylamino)methylideneamino]imidazole-4-carboxamide = 5-[(5-phospho-1-deoxy-D-ribulos-1-ylimino)methylamino]-1-(5-phospho-beta-D-ribosyl)imidazole-4-carboxamide</text>
        <dbReference type="Rhea" id="RHEA:15469"/>
        <dbReference type="ChEBI" id="CHEBI:58435"/>
        <dbReference type="ChEBI" id="CHEBI:58525"/>
        <dbReference type="EC" id="5.3.1.16"/>
    </reaction>
</comment>
<comment type="pathway">
    <text evidence="1">Amino-acid biosynthesis; L-histidine biosynthesis; L-histidine from 5-phospho-alpha-D-ribose 1-diphosphate: step 4/9.</text>
</comment>
<comment type="subcellular location">
    <subcellularLocation>
        <location evidence="1">Cytoplasm</location>
    </subcellularLocation>
</comment>
<comment type="similarity">
    <text evidence="1">Belongs to the HisA/HisF family.</text>
</comment>
<gene>
    <name evidence="1" type="primary">hisA</name>
    <name type="ordered locus">MW2593</name>
</gene>
<organism>
    <name type="scientific">Staphylococcus aureus (strain MW2)</name>
    <dbReference type="NCBI Taxonomy" id="196620"/>
    <lineage>
        <taxon>Bacteria</taxon>
        <taxon>Bacillati</taxon>
        <taxon>Bacillota</taxon>
        <taxon>Bacilli</taxon>
        <taxon>Bacillales</taxon>
        <taxon>Staphylococcaceae</taxon>
        <taxon>Staphylococcus</taxon>
    </lineage>
</organism>
<name>HIS4_STAAW</name>
<feature type="chain" id="PRO_0000142057" description="1-(5-phosphoribosyl)-5-[(5-phosphoribosylamino)methylideneamino] imidazole-4-carboxamide isomerase">
    <location>
        <begin position="1"/>
        <end position="234"/>
    </location>
</feature>
<feature type="active site" description="Proton acceptor" evidence="1">
    <location>
        <position position="9"/>
    </location>
</feature>
<feature type="active site" description="Proton donor" evidence="1">
    <location>
        <position position="131"/>
    </location>
</feature>
<reference key="1">
    <citation type="journal article" date="2002" name="Lancet">
        <title>Genome and virulence determinants of high virulence community-acquired MRSA.</title>
        <authorList>
            <person name="Baba T."/>
            <person name="Takeuchi F."/>
            <person name="Kuroda M."/>
            <person name="Yuzawa H."/>
            <person name="Aoki K."/>
            <person name="Oguchi A."/>
            <person name="Nagai Y."/>
            <person name="Iwama N."/>
            <person name="Asano K."/>
            <person name="Naimi T."/>
            <person name="Kuroda H."/>
            <person name="Cui L."/>
            <person name="Yamamoto K."/>
            <person name="Hiramatsu K."/>
        </authorList>
    </citation>
    <scope>NUCLEOTIDE SEQUENCE [LARGE SCALE GENOMIC DNA]</scope>
    <source>
        <strain>MW2</strain>
    </source>
</reference>
<accession>Q8NUI2</accession>